<proteinExistence type="evidence at protein level"/>
<feature type="chain" id="PRO_0000122469" description="GTP-binding protein 1">
    <location>
        <begin position="1"/>
        <end position="669"/>
    </location>
</feature>
<feature type="domain" description="tr-type G" evidence="5">
    <location>
        <begin position="158"/>
        <end position="389"/>
    </location>
</feature>
<feature type="region of interest" description="Disordered" evidence="6">
    <location>
        <begin position="1"/>
        <end position="32"/>
    </location>
</feature>
<feature type="region of interest" description="G1" evidence="5">
    <location>
        <begin position="167"/>
        <end position="174"/>
    </location>
</feature>
<feature type="region of interest" description="G2" evidence="5">
    <location>
        <begin position="206"/>
        <end position="210"/>
    </location>
</feature>
<feature type="region of interest" description="G3" evidence="5">
    <location>
        <begin position="252"/>
        <end position="255"/>
    </location>
</feature>
<feature type="region of interest" description="G4" evidence="5">
    <location>
        <begin position="308"/>
        <end position="311"/>
    </location>
</feature>
<feature type="region of interest" description="G5" evidence="5">
    <location>
        <begin position="366"/>
        <end position="368"/>
    </location>
</feature>
<feature type="region of interest" description="Disordered" evidence="6">
    <location>
        <begin position="573"/>
        <end position="669"/>
    </location>
</feature>
<feature type="compositionally biased region" description="Polar residues" evidence="6">
    <location>
        <begin position="573"/>
        <end position="595"/>
    </location>
</feature>
<feature type="compositionally biased region" description="Basic residues" evidence="6">
    <location>
        <begin position="646"/>
        <end position="657"/>
    </location>
</feature>
<feature type="binding site" evidence="4">
    <location>
        <begin position="167"/>
        <end position="174"/>
    </location>
    <ligand>
        <name>GTP</name>
        <dbReference type="ChEBI" id="CHEBI:37565"/>
    </ligand>
</feature>
<feature type="binding site" evidence="4">
    <location>
        <begin position="252"/>
        <end position="256"/>
    </location>
    <ligand>
        <name>GTP</name>
        <dbReference type="ChEBI" id="CHEBI:37565"/>
    </ligand>
</feature>
<feature type="binding site" evidence="4">
    <location>
        <begin position="308"/>
        <end position="311"/>
    </location>
    <ligand>
        <name>GTP</name>
        <dbReference type="ChEBI" id="CHEBI:37565"/>
    </ligand>
</feature>
<feature type="modified residue" description="Phosphoserine" evidence="3">
    <location>
        <position position="6"/>
    </location>
</feature>
<feature type="modified residue" description="Phosphoserine" evidence="3">
    <location>
        <position position="8"/>
    </location>
</feature>
<feature type="modified residue" description="Phosphoserine" evidence="13">
    <location>
        <position position="12"/>
    </location>
</feature>
<feature type="modified residue" description="Phosphoserine" evidence="3">
    <location>
        <position position="24"/>
    </location>
</feature>
<feature type="modified residue" description="Phosphoserine" evidence="9">
    <location>
        <position position="25"/>
    </location>
</feature>
<feature type="modified residue" description="Phosphoserine" evidence="9 10 13">
    <location>
        <position position="44"/>
    </location>
</feature>
<feature type="modified residue" description="Phosphoserine" evidence="9 10 13">
    <location>
        <position position="47"/>
    </location>
</feature>
<feature type="modified residue" description="Phosphoserine" evidence="13">
    <location>
        <position position="69"/>
    </location>
</feature>
<feature type="modified residue" description="Phosphoserine" evidence="9 11 12 13">
    <location>
        <position position="580"/>
    </location>
</feature>
<feature type="sequence variant" id="VAR_049496" description="In dbSNP:rs11547402.">
    <original>G</original>
    <variation>R</variation>
    <location>
        <position position="91"/>
    </location>
</feature>
<feature type="sequence variant" id="VAR_089981" description="In NEDFET1; uncertain significance." evidence="7">
    <original>T</original>
    <variation>A</variation>
    <location>
        <position position="208"/>
    </location>
</feature>
<feature type="sequence variant" id="VAR_089982" description="In NEDFET1; uncertain significance." evidence="7">
    <location>
        <begin position="509"/>
        <end position="669"/>
    </location>
</feature>
<feature type="sequence variant" id="VAR_089983" description="In NEDFET1; uncertain significance." evidence="7">
    <location>
        <begin position="555"/>
        <end position="669"/>
    </location>
</feature>
<sequence>MATERSRSAMDSPVPASMFAPEPSSPGAARAAAAAARLHGGFDSDCSEDGEALNGEPELDLTSKLVLVSPTSEQYDSLLRQMWERMDEGCGETIYVIGQGSDGTEYGLSEADMEASYATVKSMAEQIEADVILLRERQEAGGRVRDYLVRKRVGDNDFLEVRVAVVGNVDAGKSTLLGVLTHGELDNGRGFARQKLFRHKHEIESGRTSSVGNDILGFDSEGNVVNKPDSHGGSLEWTKICEKSTKVITFIDLAGHEKYLKTTVFGMTGHLPDFCMLMVGSNAGIVGMTKEHLGLALALNVPVFVVVTKIDMCPANILQETLKLLQRLLKSPGCRKIPVLVQSKDDVIVTASNFSSERMCPIFQISNVTGENLDLLKMFLNLLSPRTSYREEEPAEFQIDDTYSVPGVGTVVSGTTLRGLIKLNDTLLLGPDPLGNFLSIAVKSIHRKRMPVKEVRGGQTASFALKKIKRSSIRKGMVMVSPRLNPQASWEFEAEILVLHHPTTISPRYQAMVHCGSIRQTATILSMDKDCLRTGDKATVHFRFIKTPEYLHIDQRLVFREGRTKAVGTITKLLQTTNNSPMNSKPQQIKMQSTKKGPLTKRDEGGPSGGPAVGAPPPGDEASSVGAGQPAASSNLQPQPKPSSGGRRRGGQRHKVKSQGACVTPASGC</sequence>
<protein>
    <recommendedName>
        <fullName>GTP-binding protein 1</fullName>
        <shortName>G-protein 1</shortName>
        <shortName>GP-1</shortName>
        <shortName>GP1</shortName>
    </recommendedName>
</protein>
<comment type="function">
    <text evidence="2">Promotes degradation of target mRNA species. Plays a role in the regulation of circadian mRNA stability. Binds GTP and has GTPase activity (By similarity).</text>
</comment>
<comment type="subunit">
    <text evidence="1">Interacts with EXOSC2/RRP4, EXOSC3/RRP40, EXOSC5/RRP46, HNRNPD, HNRNPR and SYNCRIP. Identified in a complex with AANAT mRNA, but does not bind mRNA by itself (By similarity).</text>
</comment>
<comment type="interaction">
    <interactant intactId="EBI-4403245">
        <id>O00178</id>
    </interactant>
    <interactant intactId="EBI-718586">
        <id>Q9BPX7</id>
        <label>C7orf25</label>
    </interactant>
    <organismsDiffer>false</organismsDiffer>
    <experiments>3</experiments>
</comment>
<comment type="subcellular location">
    <subcellularLocation>
        <location evidence="1">Cytoplasm</location>
    </subcellularLocation>
</comment>
<comment type="disease" evidence="7">
    <disease id="DI-06930">
        <name>Neurodevelopmental disorder with characteristic facial and ectodermal features and tetraparesis 1</name>
        <acronym>NEDFET1</acronym>
        <description>An autosomal recessive disorder characterized by microcephaly, profound neurodevelopmental impairment, distinctive craniofacial features, ectodermal defects, and tetraparesis.</description>
        <dbReference type="MIM" id="620888"/>
    </disease>
    <text>The disease may be caused by variants affecting the gene represented in this entry.</text>
</comment>
<comment type="similarity">
    <text evidence="5">Belongs to the TRAFAC class translation factor GTPase superfamily. Classic translation factor GTPase family. GTPBP1 subfamily.</text>
</comment>
<comment type="sequence caution" evidence="8">
    <conflict type="erroneous initiation">
        <sequence resource="EMBL-CDS" id="AAB51273"/>
    </conflict>
    <text>Truncated N-terminus.</text>
</comment>
<comment type="sequence caution" evidence="8">
    <conflict type="erroneous initiation">
        <sequence resource="EMBL-CDS" id="CAG30387"/>
    </conflict>
    <text>Truncated N-terminus.</text>
</comment>
<organism>
    <name type="scientific">Homo sapiens</name>
    <name type="common">Human</name>
    <dbReference type="NCBI Taxonomy" id="9606"/>
    <lineage>
        <taxon>Eukaryota</taxon>
        <taxon>Metazoa</taxon>
        <taxon>Chordata</taxon>
        <taxon>Craniata</taxon>
        <taxon>Vertebrata</taxon>
        <taxon>Euteleostomi</taxon>
        <taxon>Mammalia</taxon>
        <taxon>Eutheria</taxon>
        <taxon>Euarchontoglires</taxon>
        <taxon>Primates</taxon>
        <taxon>Haplorrhini</taxon>
        <taxon>Catarrhini</taxon>
        <taxon>Hominidae</taxon>
        <taxon>Homo</taxon>
    </lineage>
</organism>
<dbReference type="EMBL" id="AL021707">
    <property type="status" value="NOT_ANNOTATED_CDS"/>
    <property type="molecule type" value="Genomic_DNA"/>
</dbReference>
<dbReference type="EMBL" id="BC014075">
    <property type="protein sequence ID" value="AAH14075.3"/>
    <property type="molecule type" value="mRNA"/>
</dbReference>
<dbReference type="EMBL" id="CR456501">
    <property type="protein sequence ID" value="CAG30387.1"/>
    <property type="status" value="ALT_INIT"/>
    <property type="molecule type" value="mRNA"/>
</dbReference>
<dbReference type="EMBL" id="U87964">
    <property type="protein sequence ID" value="AAB51273.1"/>
    <property type="status" value="ALT_INIT"/>
    <property type="molecule type" value="mRNA"/>
</dbReference>
<dbReference type="CCDS" id="CCDS13977.2"/>
<dbReference type="PIR" id="JC5291">
    <property type="entry name" value="JC5291"/>
</dbReference>
<dbReference type="RefSeq" id="NP_004277.2">
    <property type="nucleotide sequence ID" value="NM_004286.5"/>
</dbReference>
<dbReference type="SMR" id="O00178"/>
<dbReference type="BioGRID" id="114937">
    <property type="interactions" value="139"/>
</dbReference>
<dbReference type="FunCoup" id="O00178">
    <property type="interactions" value="1859"/>
</dbReference>
<dbReference type="IntAct" id="O00178">
    <property type="interactions" value="56"/>
</dbReference>
<dbReference type="MINT" id="O00178"/>
<dbReference type="STRING" id="9606.ENSP00000216044"/>
<dbReference type="GlyCosmos" id="O00178">
    <property type="glycosylation" value="2 sites, 1 glycan"/>
</dbReference>
<dbReference type="GlyGen" id="O00178">
    <property type="glycosylation" value="4 sites, 2 O-linked glycans (3 sites)"/>
</dbReference>
<dbReference type="iPTMnet" id="O00178"/>
<dbReference type="PhosphoSitePlus" id="O00178"/>
<dbReference type="BioMuta" id="GTPBP1"/>
<dbReference type="CPTAC" id="CPTAC-1610"/>
<dbReference type="jPOST" id="O00178"/>
<dbReference type="MassIVE" id="O00178"/>
<dbReference type="PaxDb" id="9606-ENSP00000216044"/>
<dbReference type="PeptideAtlas" id="O00178"/>
<dbReference type="ProteomicsDB" id="47762"/>
<dbReference type="Pumba" id="O00178"/>
<dbReference type="Antibodypedia" id="26419">
    <property type="antibodies" value="196 antibodies from 27 providers"/>
</dbReference>
<dbReference type="DNASU" id="9567"/>
<dbReference type="Ensembl" id="ENST00000216044.10">
    <property type="protein sequence ID" value="ENSP00000216044.5"/>
    <property type="gene ID" value="ENSG00000100226.16"/>
</dbReference>
<dbReference type="GeneID" id="9567"/>
<dbReference type="KEGG" id="hsa:9567"/>
<dbReference type="MANE-Select" id="ENST00000216044.10">
    <property type="protein sequence ID" value="ENSP00000216044.5"/>
    <property type="RefSeq nucleotide sequence ID" value="NM_004286.5"/>
    <property type="RefSeq protein sequence ID" value="NP_004277.2"/>
</dbReference>
<dbReference type="UCSC" id="uc003awg.4">
    <property type="organism name" value="human"/>
</dbReference>
<dbReference type="AGR" id="HGNC:4669"/>
<dbReference type="CTD" id="9567"/>
<dbReference type="DisGeNET" id="9567"/>
<dbReference type="GeneCards" id="GTPBP1"/>
<dbReference type="HGNC" id="HGNC:4669">
    <property type="gene designation" value="GTPBP1"/>
</dbReference>
<dbReference type="HPA" id="ENSG00000100226">
    <property type="expression patterns" value="Tissue enhanced (bone)"/>
</dbReference>
<dbReference type="MalaCards" id="GTPBP1"/>
<dbReference type="MIM" id="602245">
    <property type="type" value="gene"/>
</dbReference>
<dbReference type="MIM" id="620888">
    <property type="type" value="phenotype"/>
</dbReference>
<dbReference type="neXtProt" id="NX_O00178"/>
<dbReference type="OpenTargets" id="ENSG00000100226"/>
<dbReference type="PharmGKB" id="PA29057"/>
<dbReference type="VEuPathDB" id="HostDB:ENSG00000100226"/>
<dbReference type="eggNOG" id="KOG0463">
    <property type="taxonomic scope" value="Eukaryota"/>
</dbReference>
<dbReference type="GeneTree" id="ENSGT00940000156054"/>
<dbReference type="HOGENOM" id="CLU_012821_2_0_1"/>
<dbReference type="InParanoid" id="O00178"/>
<dbReference type="OMA" id="FRFIQRP"/>
<dbReference type="OrthoDB" id="248233at2759"/>
<dbReference type="PAN-GO" id="O00178">
    <property type="GO annotations" value="2 GO annotations based on evolutionary models"/>
</dbReference>
<dbReference type="PhylomeDB" id="O00178"/>
<dbReference type="TreeFam" id="TF350446"/>
<dbReference type="PathwayCommons" id="O00178"/>
<dbReference type="SignaLink" id="O00178"/>
<dbReference type="BioGRID-ORCS" id="9567">
    <property type="hits" value="22 hits in 1156 CRISPR screens"/>
</dbReference>
<dbReference type="ChiTaRS" id="GTPBP1">
    <property type="organism name" value="human"/>
</dbReference>
<dbReference type="GeneWiki" id="GTPBP1"/>
<dbReference type="GenomeRNAi" id="9567"/>
<dbReference type="Pharos" id="O00178">
    <property type="development level" value="Tbio"/>
</dbReference>
<dbReference type="PRO" id="PR:O00178"/>
<dbReference type="Proteomes" id="UP000005640">
    <property type="component" value="Chromosome 22"/>
</dbReference>
<dbReference type="RNAct" id="O00178">
    <property type="molecule type" value="protein"/>
</dbReference>
<dbReference type="Bgee" id="ENSG00000100226">
    <property type="expression patterns" value="Expressed in sural nerve and 182 other cell types or tissues"/>
</dbReference>
<dbReference type="ExpressionAtlas" id="O00178">
    <property type="expression patterns" value="baseline and differential"/>
</dbReference>
<dbReference type="GO" id="GO:0000177">
    <property type="term" value="C:cytoplasmic exosome (RNase complex)"/>
    <property type="evidence" value="ECO:0000250"/>
    <property type="project" value="UniProtKB"/>
</dbReference>
<dbReference type="GO" id="GO:0005829">
    <property type="term" value="C:cytosol"/>
    <property type="evidence" value="ECO:0000250"/>
    <property type="project" value="UniProtKB"/>
</dbReference>
<dbReference type="GO" id="GO:0016020">
    <property type="term" value="C:membrane"/>
    <property type="evidence" value="ECO:0007005"/>
    <property type="project" value="UniProtKB"/>
</dbReference>
<dbReference type="GO" id="GO:1904678">
    <property type="term" value="F:alpha-aminoacyl-tRNA binding"/>
    <property type="evidence" value="ECO:0000314"/>
    <property type="project" value="FlyBase"/>
</dbReference>
<dbReference type="GO" id="GO:0005525">
    <property type="term" value="F:GTP binding"/>
    <property type="evidence" value="ECO:0000304"/>
    <property type="project" value="ProtInc"/>
</dbReference>
<dbReference type="GO" id="GO:0003924">
    <property type="term" value="F:GTPase activity"/>
    <property type="evidence" value="ECO:0000314"/>
    <property type="project" value="FlyBase"/>
</dbReference>
<dbReference type="GO" id="GO:0003723">
    <property type="term" value="F:RNA binding"/>
    <property type="evidence" value="ECO:0007005"/>
    <property type="project" value="UniProtKB"/>
</dbReference>
<dbReference type="GO" id="GO:0003746">
    <property type="term" value="F:translation elongation factor activity"/>
    <property type="evidence" value="ECO:0000314"/>
    <property type="project" value="FlyBase"/>
</dbReference>
<dbReference type="GO" id="GO:0000049">
    <property type="term" value="F:tRNA binding"/>
    <property type="evidence" value="ECO:0000314"/>
    <property type="project" value="FlyBase"/>
</dbReference>
<dbReference type="GO" id="GO:0002181">
    <property type="term" value="P:cytoplasmic translation"/>
    <property type="evidence" value="ECO:0000314"/>
    <property type="project" value="FlyBase"/>
</dbReference>
<dbReference type="GO" id="GO:0046039">
    <property type="term" value="P:GTP metabolic process"/>
    <property type="evidence" value="ECO:0000250"/>
    <property type="project" value="UniProtKB"/>
</dbReference>
<dbReference type="GO" id="GO:0006955">
    <property type="term" value="P:immune response"/>
    <property type="evidence" value="ECO:0000304"/>
    <property type="project" value="ProtInc"/>
</dbReference>
<dbReference type="GO" id="GO:0061014">
    <property type="term" value="P:positive regulation of mRNA catabolic process"/>
    <property type="evidence" value="ECO:0000250"/>
    <property type="project" value="UniProtKB"/>
</dbReference>
<dbReference type="GO" id="GO:0007165">
    <property type="term" value="P:signal transduction"/>
    <property type="evidence" value="ECO:0000304"/>
    <property type="project" value="ProtInc"/>
</dbReference>
<dbReference type="GO" id="GO:0006414">
    <property type="term" value="P:translational elongation"/>
    <property type="evidence" value="ECO:0000318"/>
    <property type="project" value="GO_Central"/>
</dbReference>
<dbReference type="CDD" id="cd04165">
    <property type="entry name" value="GTPBP1_like"/>
    <property type="match status" value="1"/>
</dbReference>
<dbReference type="CDD" id="cd03694">
    <property type="entry name" value="GTPBP_II"/>
    <property type="match status" value="1"/>
</dbReference>
<dbReference type="CDD" id="cd03708">
    <property type="entry name" value="GTPBP_III"/>
    <property type="match status" value="1"/>
</dbReference>
<dbReference type="FunFam" id="2.40.30.10:FF:000028">
    <property type="entry name" value="GTP-binding protein 1,-like"/>
    <property type="match status" value="1"/>
</dbReference>
<dbReference type="FunFam" id="2.40.30.10:FF:000014">
    <property type="entry name" value="Probable GTP-binding protein 1"/>
    <property type="match status" value="1"/>
</dbReference>
<dbReference type="FunFam" id="3.40.50.300:FF:000091">
    <property type="entry name" value="Probable GTP-binding protein 1"/>
    <property type="match status" value="1"/>
</dbReference>
<dbReference type="Gene3D" id="3.40.50.300">
    <property type="entry name" value="P-loop containing nucleotide triphosphate hydrolases"/>
    <property type="match status" value="1"/>
</dbReference>
<dbReference type="Gene3D" id="2.40.30.10">
    <property type="entry name" value="Translation factors"/>
    <property type="match status" value="2"/>
</dbReference>
<dbReference type="InterPro" id="IPR050055">
    <property type="entry name" value="EF-Tu_GTPase"/>
</dbReference>
<dbReference type="InterPro" id="IPR004161">
    <property type="entry name" value="EFTu-like_2"/>
</dbReference>
<dbReference type="InterPro" id="IPR035531">
    <property type="entry name" value="GTPBP1-like"/>
</dbReference>
<dbReference type="InterPro" id="IPR027417">
    <property type="entry name" value="P-loop_NTPase"/>
</dbReference>
<dbReference type="InterPro" id="IPR000795">
    <property type="entry name" value="T_Tr_GTP-bd_dom"/>
</dbReference>
<dbReference type="InterPro" id="IPR009000">
    <property type="entry name" value="Transl_B-barrel_sf"/>
</dbReference>
<dbReference type="InterPro" id="IPR009001">
    <property type="entry name" value="Transl_elong_EF1A/Init_IF2_C"/>
</dbReference>
<dbReference type="PANTHER" id="PTHR43721">
    <property type="entry name" value="ELONGATION FACTOR TU-RELATED"/>
    <property type="match status" value="1"/>
</dbReference>
<dbReference type="PANTHER" id="PTHR43721:SF9">
    <property type="entry name" value="GTP-BINDING PROTEIN 1"/>
    <property type="match status" value="1"/>
</dbReference>
<dbReference type="Pfam" id="PF00009">
    <property type="entry name" value="GTP_EFTU"/>
    <property type="match status" value="1"/>
</dbReference>
<dbReference type="Pfam" id="PF03144">
    <property type="entry name" value="GTP_EFTU_D2"/>
    <property type="match status" value="1"/>
</dbReference>
<dbReference type="SUPFAM" id="SSF50465">
    <property type="entry name" value="EF-Tu/eEF-1alpha/eIF2-gamma C-terminal domain"/>
    <property type="match status" value="1"/>
</dbReference>
<dbReference type="SUPFAM" id="SSF52540">
    <property type="entry name" value="P-loop containing nucleoside triphosphate hydrolases"/>
    <property type="match status" value="1"/>
</dbReference>
<dbReference type="SUPFAM" id="SSF50447">
    <property type="entry name" value="Translation proteins"/>
    <property type="match status" value="1"/>
</dbReference>
<dbReference type="PROSITE" id="PS51722">
    <property type="entry name" value="G_TR_2"/>
    <property type="match status" value="1"/>
</dbReference>
<reference key="1">
    <citation type="journal article" date="1999" name="Nature">
        <title>The DNA sequence of human chromosome 22.</title>
        <authorList>
            <person name="Dunham I."/>
            <person name="Hunt A.R."/>
            <person name="Collins J.E."/>
            <person name="Bruskiewich R."/>
            <person name="Beare D.M."/>
            <person name="Clamp M."/>
            <person name="Smink L.J."/>
            <person name="Ainscough R."/>
            <person name="Almeida J.P."/>
            <person name="Babbage A.K."/>
            <person name="Bagguley C."/>
            <person name="Bailey J."/>
            <person name="Barlow K.F."/>
            <person name="Bates K.N."/>
            <person name="Beasley O.P."/>
            <person name="Bird C.P."/>
            <person name="Blakey S.E."/>
            <person name="Bridgeman A.M."/>
            <person name="Buck D."/>
            <person name="Burgess J."/>
            <person name="Burrill W.D."/>
            <person name="Burton J."/>
            <person name="Carder C."/>
            <person name="Carter N.P."/>
            <person name="Chen Y."/>
            <person name="Clark G."/>
            <person name="Clegg S.M."/>
            <person name="Cobley V.E."/>
            <person name="Cole C.G."/>
            <person name="Collier R.E."/>
            <person name="Connor R."/>
            <person name="Conroy D."/>
            <person name="Corby N.R."/>
            <person name="Coville G.J."/>
            <person name="Cox A.V."/>
            <person name="Davis J."/>
            <person name="Dawson E."/>
            <person name="Dhami P.D."/>
            <person name="Dockree C."/>
            <person name="Dodsworth S.J."/>
            <person name="Durbin R.M."/>
            <person name="Ellington A.G."/>
            <person name="Evans K.L."/>
            <person name="Fey J.M."/>
            <person name="Fleming K."/>
            <person name="French L."/>
            <person name="Garner A.A."/>
            <person name="Gilbert J.G.R."/>
            <person name="Goward M.E."/>
            <person name="Grafham D.V."/>
            <person name="Griffiths M.N.D."/>
            <person name="Hall C."/>
            <person name="Hall R.E."/>
            <person name="Hall-Tamlyn G."/>
            <person name="Heathcott R.W."/>
            <person name="Ho S."/>
            <person name="Holmes S."/>
            <person name="Hunt S.E."/>
            <person name="Jones M.C."/>
            <person name="Kershaw J."/>
            <person name="Kimberley A.M."/>
            <person name="King A."/>
            <person name="Laird G.K."/>
            <person name="Langford C.F."/>
            <person name="Leversha M.A."/>
            <person name="Lloyd C."/>
            <person name="Lloyd D.M."/>
            <person name="Martyn I.D."/>
            <person name="Mashreghi-Mohammadi M."/>
            <person name="Matthews L.H."/>
            <person name="Mccann O.T."/>
            <person name="Mcclay J."/>
            <person name="Mclaren S."/>
            <person name="McMurray A.A."/>
            <person name="Milne S.A."/>
            <person name="Mortimore B.J."/>
            <person name="Odell C.N."/>
            <person name="Pavitt R."/>
            <person name="Pearce A.V."/>
            <person name="Pearson D."/>
            <person name="Phillimore B.J.C.T."/>
            <person name="Phillips S.H."/>
            <person name="Plumb R.W."/>
            <person name="Ramsay H."/>
            <person name="Ramsey Y."/>
            <person name="Rogers L."/>
            <person name="Ross M.T."/>
            <person name="Scott C.E."/>
            <person name="Sehra H.K."/>
            <person name="Skuce C.D."/>
            <person name="Smalley S."/>
            <person name="Smith M.L."/>
            <person name="Soderlund C."/>
            <person name="Spragon L."/>
            <person name="Steward C.A."/>
            <person name="Sulston J.E."/>
            <person name="Swann R.M."/>
            <person name="Vaudin M."/>
            <person name="Wall M."/>
            <person name="Wallis J.M."/>
            <person name="Whiteley M.N."/>
            <person name="Willey D.L."/>
            <person name="Williams L."/>
            <person name="Williams S.A."/>
            <person name="Williamson H."/>
            <person name="Wilmer T.E."/>
            <person name="Wilming L."/>
            <person name="Wright C.L."/>
            <person name="Hubbard T."/>
            <person name="Bentley D.R."/>
            <person name="Beck S."/>
            <person name="Rogers J."/>
            <person name="Shimizu N."/>
            <person name="Minoshima S."/>
            <person name="Kawasaki K."/>
            <person name="Sasaki T."/>
            <person name="Asakawa S."/>
            <person name="Kudoh J."/>
            <person name="Shintani A."/>
            <person name="Shibuya K."/>
            <person name="Yoshizaki Y."/>
            <person name="Aoki N."/>
            <person name="Mitsuyama S."/>
            <person name="Roe B.A."/>
            <person name="Chen F."/>
            <person name="Chu L."/>
            <person name="Crabtree J."/>
            <person name="Deschamps S."/>
            <person name="Do A."/>
            <person name="Do T."/>
            <person name="Dorman A."/>
            <person name="Fang F."/>
            <person name="Fu Y."/>
            <person name="Hu P."/>
            <person name="Hua A."/>
            <person name="Kenton S."/>
            <person name="Lai H."/>
            <person name="Lao H.I."/>
            <person name="Lewis J."/>
            <person name="Lewis S."/>
            <person name="Lin S.-P."/>
            <person name="Loh P."/>
            <person name="Malaj E."/>
            <person name="Nguyen T."/>
            <person name="Pan H."/>
            <person name="Phan S."/>
            <person name="Qi S."/>
            <person name="Qian Y."/>
            <person name="Ray L."/>
            <person name="Ren Q."/>
            <person name="Shaull S."/>
            <person name="Sloan D."/>
            <person name="Song L."/>
            <person name="Wang Q."/>
            <person name="Wang Y."/>
            <person name="Wang Z."/>
            <person name="White J."/>
            <person name="Willingham D."/>
            <person name="Wu H."/>
            <person name="Yao Z."/>
            <person name="Zhan M."/>
            <person name="Zhang G."/>
            <person name="Chissoe S."/>
            <person name="Murray J."/>
            <person name="Miller N."/>
            <person name="Minx P."/>
            <person name="Fulton R."/>
            <person name="Johnson D."/>
            <person name="Bemis G."/>
            <person name="Bentley D."/>
            <person name="Bradshaw H."/>
            <person name="Bourne S."/>
            <person name="Cordes M."/>
            <person name="Du Z."/>
            <person name="Fulton L."/>
            <person name="Goela D."/>
            <person name="Graves T."/>
            <person name="Hawkins J."/>
            <person name="Hinds K."/>
            <person name="Kemp K."/>
            <person name="Latreille P."/>
            <person name="Layman D."/>
            <person name="Ozersky P."/>
            <person name="Rohlfing T."/>
            <person name="Scheet P."/>
            <person name="Walker C."/>
            <person name="Wamsley A."/>
            <person name="Wohldmann P."/>
            <person name="Pepin K."/>
            <person name="Nelson J."/>
            <person name="Korf I."/>
            <person name="Bedell J.A."/>
            <person name="Hillier L.W."/>
            <person name="Mardis E."/>
            <person name="Waterston R."/>
            <person name="Wilson R."/>
            <person name="Emanuel B.S."/>
            <person name="Shaikh T."/>
            <person name="Kurahashi H."/>
            <person name="Saitta S."/>
            <person name="Budarf M.L."/>
            <person name="McDermid H.E."/>
            <person name="Johnson A."/>
            <person name="Wong A.C.C."/>
            <person name="Morrow B.E."/>
            <person name="Edelmann L."/>
            <person name="Kim U.J."/>
            <person name="Shizuya H."/>
            <person name="Simon M.I."/>
            <person name="Dumanski J.P."/>
            <person name="Peyrard M."/>
            <person name="Kedra D."/>
            <person name="Seroussi E."/>
            <person name="Fransson I."/>
            <person name="Tapia I."/>
            <person name="Bruder C.E."/>
            <person name="O'Brien K.P."/>
            <person name="Wilkinson P."/>
            <person name="Bodenteich A."/>
            <person name="Hartman K."/>
            <person name="Hu X."/>
            <person name="Khan A.S."/>
            <person name="Lane L."/>
            <person name="Tilahun Y."/>
            <person name="Wright H."/>
        </authorList>
    </citation>
    <scope>NUCLEOTIDE SEQUENCE [LARGE SCALE GENOMIC DNA]</scope>
</reference>
<reference key="2">
    <citation type="journal article" date="2004" name="Genome Res.">
        <title>The status, quality, and expansion of the NIH full-length cDNA project: the Mammalian Gene Collection (MGC).</title>
        <authorList>
            <consortium name="The MGC Project Team"/>
        </authorList>
    </citation>
    <scope>NUCLEOTIDE SEQUENCE [LARGE SCALE MRNA] OF 4-669</scope>
    <source>
        <tissue>Brain</tissue>
    </source>
</reference>
<reference key="3">
    <citation type="journal article" date="2004" name="Genome Biol.">
        <title>A genome annotation-driven approach to cloning the human ORFeome.</title>
        <authorList>
            <person name="Collins J.E."/>
            <person name="Wright C.L."/>
            <person name="Edwards C.A."/>
            <person name="Davis M.P."/>
            <person name="Grinham J.A."/>
            <person name="Cole C.G."/>
            <person name="Goward M.E."/>
            <person name="Aguado B."/>
            <person name="Mallya M."/>
            <person name="Mokrab Y."/>
            <person name="Huckle E.J."/>
            <person name="Beare D.M."/>
            <person name="Dunham I."/>
        </authorList>
    </citation>
    <scope>NUCLEOTIDE SEQUENCE [LARGE SCALE MRNA] OF 9-669</scope>
</reference>
<reference key="4">
    <citation type="journal article" date="1997" name="Biochem. Biophys. Res. Commun.">
        <title>Identification of human and mouse GP-1, a putative member of a novel G-protein family.</title>
        <authorList>
            <person name="Senju S."/>
            <person name="Nishimura Y."/>
        </authorList>
    </citation>
    <scope>NUCLEOTIDE SEQUENCE [MRNA] OF 35-669</scope>
</reference>
<reference key="5">
    <citation type="journal article" date="2008" name="Proc. Natl. Acad. Sci. U.S.A.">
        <title>A quantitative atlas of mitotic phosphorylation.</title>
        <authorList>
            <person name="Dephoure N."/>
            <person name="Zhou C."/>
            <person name="Villen J."/>
            <person name="Beausoleil S.A."/>
            <person name="Bakalarski C.E."/>
            <person name="Elledge S.J."/>
            <person name="Gygi S.P."/>
        </authorList>
    </citation>
    <scope>PHOSPHORYLATION [LARGE SCALE ANALYSIS] AT SER-25; SER-44; SER-47 AND SER-580</scope>
    <scope>IDENTIFICATION BY MASS SPECTROMETRY [LARGE SCALE ANALYSIS]</scope>
    <source>
        <tissue>Cervix carcinoma</tissue>
    </source>
</reference>
<reference key="6">
    <citation type="journal article" date="2009" name="Anal. Chem.">
        <title>Lys-N and trypsin cover complementary parts of the phosphoproteome in a refined SCX-based approach.</title>
        <authorList>
            <person name="Gauci S."/>
            <person name="Helbig A.O."/>
            <person name="Slijper M."/>
            <person name="Krijgsveld J."/>
            <person name="Heck A.J."/>
            <person name="Mohammed S."/>
        </authorList>
    </citation>
    <scope>IDENTIFICATION BY MASS SPECTROMETRY [LARGE SCALE ANALYSIS]</scope>
</reference>
<reference key="7">
    <citation type="journal article" date="2009" name="Sci. Signal.">
        <title>Quantitative phosphoproteomic analysis of T cell receptor signaling reveals system-wide modulation of protein-protein interactions.</title>
        <authorList>
            <person name="Mayya V."/>
            <person name="Lundgren D.H."/>
            <person name="Hwang S.-I."/>
            <person name="Rezaul K."/>
            <person name="Wu L."/>
            <person name="Eng J.K."/>
            <person name="Rodionov V."/>
            <person name="Han D.K."/>
        </authorList>
    </citation>
    <scope>PHOSPHORYLATION [LARGE SCALE ANALYSIS] AT SER-44 AND SER-47</scope>
    <scope>IDENTIFICATION BY MASS SPECTROMETRY [LARGE SCALE ANALYSIS]</scope>
    <source>
        <tissue>Leukemic T-cell</tissue>
    </source>
</reference>
<reference key="8">
    <citation type="journal article" date="2010" name="Sci. Signal.">
        <title>Quantitative phosphoproteomics reveals widespread full phosphorylation site occupancy during mitosis.</title>
        <authorList>
            <person name="Olsen J.V."/>
            <person name="Vermeulen M."/>
            <person name="Santamaria A."/>
            <person name="Kumar C."/>
            <person name="Miller M.L."/>
            <person name="Jensen L.J."/>
            <person name="Gnad F."/>
            <person name="Cox J."/>
            <person name="Jensen T.S."/>
            <person name="Nigg E.A."/>
            <person name="Brunak S."/>
            <person name="Mann M."/>
        </authorList>
    </citation>
    <scope>PHOSPHORYLATION [LARGE SCALE ANALYSIS] AT SER-580</scope>
    <scope>IDENTIFICATION BY MASS SPECTROMETRY [LARGE SCALE ANALYSIS]</scope>
    <source>
        <tissue>Cervix carcinoma</tissue>
    </source>
</reference>
<reference key="9">
    <citation type="journal article" date="2011" name="BMC Syst. Biol.">
        <title>Initial characterization of the human central proteome.</title>
        <authorList>
            <person name="Burkard T.R."/>
            <person name="Planyavsky M."/>
            <person name="Kaupe I."/>
            <person name="Breitwieser F.P."/>
            <person name="Buerckstuemmer T."/>
            <person name="Bennett K.L."/>
            <person name="Superti-Furga G."/>
            <person name="Colinge J."/>
        </authorList>
    </citation>
    <scope>IDENTIFICATION BY MASS SPECTROMETRY [LARGE SCALE ANALYSIS]</scope>
</reference>
<reference key="10">
    <citation type="journal article" date="2011" name="Sci. Signal.">
        <title>System-wide temporal characterization of the proteome and phosphoproteome of human embryonic stem cell differentiation.</title>
        <authorList>
            <person name="Rigbolt K.T."/>
            <person name="Prokhorova T.A."/>
            <person name="Akimov V."/>
            <person name="Henningsen J."/>
            <person name="Johansen P.T."/>
            <person name="Kratchmarova I."/>
            <person name="Kassem M."/>
            <person name="Mann M."/>
            <person name="Olsen J.V."/>
            <person name="Blagoev B."/>
        </authorList>
    </citation>
    <scope>PHOSPHORYLATION [LARGE SCALE ANALYSIS] AT SER-580</scope>
    <scope>IDENTIFICATION BY MASS SPECTROMETRY [LARGE SCALE ANALYSIS]</scope>
</reference>
<reference key="11">
    <citation type="journal article" date="2013" name="J. Proteome Res.">
        <title>Toward a comprehensive characterization of a human cancer cell phosphoproteome.</title>
        <authorList>
            <person name="Zhou H."/>
            <person name="Di Palma S."/>
            <person name="Preisinger C."/>
            <person name="Peng M."/>
            <person name="Polat A.N."/>
            <person name="Heck A.J."/>
            <person name="Mohammed S."/>
        </authorList>
    </citation>
    <scope>PHOSPHORYLATION [LARGE SCALE ANALYSIS] AT SER-12; SER-44; SER-47; SER-69 AND SER-580</scope>
    <scope>IDENTIFICATION BY MASS SPECTROMETRY [LARGE SCALE ANALYSIS]</scope>
    <source>
        <tissue>Cervix carcinoma</tissue>
        <tissue>Erythroleukemia</tissue>
    </source>
</reference>
<reference key="12">
    <citation type="journal article" date="2014" name="J. Proteomics">
        <title>An enzyme assisted RP-RPLC approach for in-depth analysis of human liver phosphoproteome.</title>
        <authorList>
            <person name="Bian Y."/>
            <person name="Song C."/>
            <person name="Cheng K."/>
            <person name="Dong M."/>
            <person name="Wang F."/>
            <person name="Huang J."/>
            <person name="Sun D."/>
            <person name="Wang L."/>
            <person name="Ye M."/>
            <person name="Zou H."/>
        </authorList>
    </citation>
    <scope>IDENTIFICATION BY MASS SPECTROMETRY [LARGE SCALE ANALYSIS]</scope>
    <source>
        <tissue>Liver</tissue>
    </source>
</reference>
<reference key="13">
    <citation type="journal article" date="2024" name="Am. J. Hum. Genet.">
        <title>Bi-allelic genetic variants in the translational GTPases GTPBP1 and GTPBP2 cause a distinct identical neurodevelopmental syndrome.</title>
        <authorList>
            <consortium name="SYNAPS Study Group"/>
            <person name="Salpietro V."/>
            <person name="Maroofian R."/>
            <person name="Zaki M.S."/>
            <person name="Wangen J."/>
            <person name="Ciolfi A."/>
            <person name="Barresi S."/>
            <person name="Efthymiou S."/>
            <person name="Lamaze A."/>
            <person name="Aughey G.N."/>
            <person name="Al Mutairi F."/>
            <person name="Rad A."/>
            <person name="Rocca C."/>
            <person name="Cali E."/>
            <person name="Accogli A."/>
            <person name="Zara F."/>
            <person name="Striano P."/>
            <person name="Mojarrad M."/>
            <person name="Tariq H."/>
            <person name="Giacopuzzi E."/>
            <person name="Taylor J.C."/>
            <person name="Oprea G."/>
            <person name="Skrahina V."/>
            <person name="Rehman K.U."/>
            <person name="Abd Elmaksoud M."/>
            <person name="Bassiony M."/>
            <person name="El Said H.G."/>
            <person name="Abdel-Hamid M.S."/>
            <person name="Al Shalan M."/>
            <person name="Seo G."/>
            <person name="Kim S."/>
            <person name="Lee H."/>
            <person name="Khang R."/>
            <person name="Issa M.Y."/>
            <person name="Elbendary H.M."/>
            <person name="Rafat K."/>
            <person name="Marinakis N.M."/>
            <person name="Traeger-Synodinos J."/>
            <person name="Ververi A."/>
            <person name="Sourmpi M."/>
            <person name="Eslahi A."/>
            <person name="Khadivi Zand F."/>
            <person name="Beiraghi Toosi M."/>
            <person name="Babaei M."/>
            <person name="Jackson A."/>
            <person name="Bertoli-Avella A."/>
            <person name="Pagnamenta A.T."/>
            <person name="Niceta M."/>
            <person name="Battini R."/>
            <person name="Corsello A."/>
            <person name="Leoni C."/>
            <person name="Chiarelli F."/>
            <person name="Dallapiccola B."/>
            <person name="Faqeih E.A."/>
            <person name="Tallur K.K."/>
            <person name="Alfadhel M."/>
            <person name="Alobeid E."/>
            <person name="Maddirevula S."/>
            <person name="Mankad K."/>
            <person name="Banka S."/>
            <person name="Ghayoor-Karimiani E."/>
            <person name="Tartaglia M."/>
            <person name="Chung W.K."/>
            <person name="Green R."/>
            <person name="Alkuraya F.S."/>
            <person name="Jepson J.E.C."/>
            <person name="Houlden H."/>
        </authorList>
    </citation>
    <scope>VARIANTS NEDFET1 ALA-208; 509-TYR--CYS-669 DEL AND 555-GLN--CYS-669 DEL</scope>
    <scope>INVOLVEMENT IN NEDFET1</scope>
</reference>
<gene>
    <name type="primary">GTPBP1</name>
</gene>
<name>GTPB1_HUMAN</name>
<accession>O00178</accession>
<accession>Q6IC67</accession>
<evidence type="ECO:0000250" key="1"/>
<evidence type="ECO:0000250" key="2">
    <source>
        <dbReference type="UniProtKB" id="D2XV59"/>
    </source>
</evidence>
<evidence type="ECO:0000250" key="3">
    <source>
        <dbReference type="UniProtKB" id="O08582"/>
    </source>
</evidence>
<evidence type="ECO:0000255" key="4"/>
<evidence type="ECO:0000255" key="5">
    <source>
        <dbReference type="PROSITE-ProRule" id="PRU01059"/>
    </source>
</evidence>
<evidence type="ECO:0000256" key="6">
    <source>
        <dbReference type="SAM" id="MobiDB-lite"/>
    </source>
</evidence>
<evidence type="ECO:0000269" key="7">
    <source>
    </source>
</evidence>
<evidence type="ECO:0000305" key="8"/>
<evidence type="ECO:0007744" key="9">
    <source>
    </source>
</evidence>
<evidence type="ECO:0007744" key="10">
    <source>
    </source>
</evidence>
<evidence type="ECO:0007744" key="11">
    <source>
    </source>
</evidence>
<evidence type="ECO:0007744" key="12">
    <source>
    </source>
</evidence>
<evidence type="ECO:0007744" key="13">
    <source>
    </source>
</evidence>
<keyword id="KW-0963">Cytoplasm</keyword>
<keyword id="KW-0342">GTP-binding</keyword>
<keyword id="KW-0991">Intellectual disability</keyword>
<keyword id="KW-0547">Nucleotide-binding</keyword>
<keyword id="KW-0597">Phosphoprotein</keyword>
<keyword id="KW-1267">Proteomics identification</keyword>
<keyword id="KW-1185">Reference proteome</keyword>